<proteinExistence type="evidence at protein level"/>
<protein>
    <recommendedName>
        <fullName evidence="1">Probable GTP-binding protein EngB</fullName>
    </recommendedName>
</protein>
<organism>
    <name type="scientific">Burkholderia thailandensis (strain ATCC 700388 / DSM 13276 / CCUG 48851 / CIP 106301 / E264)</name>
    <dbReference type="NCBI Taxonomy" id="271848"/>
    <lineage>
        <taxon>Bacteria</taxon>
        <taxon>Pseudomonadati</taxon>
        <taxon>Pseudomonadota</taxon>
        <taxon>Betaproteobacteria</taxon>
        <taxon>Burkholderiales</taxon>
        <taxon>Burkholderiaceae</taxon>
        <taxon>Burkholderia</taxon>
        <taxon>pseudomallei group</taxon>
    </lineage>
</organism>
<sequence>MAFLLHQARFFTTVNHLRDLPPTVQPEIAFAGRSNAGKSTAINVLCNQKRLAFASKTPGRTQHINYFSVGPAAEPVAHLVDLPGYGYAEVPGAAKAHWEQLLSSYLQTRPQLCGMILMMDARRPLTELDRRMIEWFAPTGKPIHSLLTKCDKLTRQESINALRATQKSLDAYRDAGYAGKLTVQLFSALKRTGLDDAHALIESWLRPAAADEDHAAVAE</sequence>
<dbReference type="EMBL" id="CP000086">
    <property type="protein sequence ID" value="ABC39144.1"/>
    <property type="status" value="ALT_INIT"/>
    <property type="molecule type" value="Genomic_DNA"/>
</dbReference>
<dbReference type="PDB" id="4DHE">
    <property type="method" value="X-ray"/>
    <property type="resolution" value="2.20 A"/>
    <property type="chains" value="A/B=1-219"/>
</dbReference>
<dbReference type="PDBsum" id="4DHE"/>
<dbReference type="SMR" id="Q2SU58"/>
<dbReference type="GeneID" id="45122725"/>
<dbReference type="KEGG" id="bte:BTH_I3037"/>
<dbReference type="HOGENOM" id="CLU_033732_1_1_4"/>
<dbReference type="EvolutionaryTrace" id="Q2SU58"/>
<dbReference type="Proteomes" id="UP000001930">
    <property type="component" value="Chromosome I"/>
</dbReference>
<dbReference type="GO" id="GO:0005829">
    <property type="term" value="C:cytosol"/>
    <property type="evidence" value="ECO:0007669"/>
    <property type="project" value="TreeGrafter"/>
</dbReference>
<dbReference type="GO" id="GO:0005525">
    <property type="term" value="F:GTP binding"/>
    <property type="evidence" value="ECO:0007669"/>
    <property type="project" value="UniProtKB-UniRule"/>
</dbReference>
<dbReference type="GO" id="GO:0046872">
    <property type="term" value="F:metal ion binding"/>
    <property type="evidence" value="ECO:0007669"/>
    <property type="project" value="UniProtKB-KW"/>
</dbReference>
<dbReference type="GO" id="GO:0000917">
    <property type="term" value="P:division septum assembly"/>
    <property type="evidence" value="ECO:0007669"/>
    <property type="project" value="UniProtKB-KW"/>
</dbReference>
<dbReference type="CDD" id="cd01876">
    <property type="entry name" value="YihA_EngB"/>
    <property type="match status" value="1"/>
</dbReference>
<dbReference type="FunFam" id="3.40.50.300:FF:000098">
    <property type="entry name" value="Probable GTP-binding protein EngB"/>
    <property type="match status" value="1"/>
</dbReference>
<dbReference type="Gene3D" id="3.40.50.300">
    <property type="entry name" value="P-loop containing nucleotide triphosphate hydrolases"/>
    <property type="match status" value="1"/>
</dbReference>
<dbReference type="HAMAP" id="MF_00321">
    <property type="entry name" value="GTPase_EngB"/>
    <property type="match status" value="1"/>
</dbReference>
<dbReference type="InterPro" id="IPR030393">
    <property type="entry name" value="G_ENGB_dom"/>
</dbReference>
<dbReference type="InterPro" id="IPR006073">
    <property type="entry name" value="GTP-bd"/>
</dbReference>
<dbReference type="InterPro" id="IPR019987">
    <property type="entry name" value="GTP-bd_ribosome_bio_YsxC"/>
</dbReference>
<dbReference type="InterPro" id="IPR027417">
    <property type="entry name" value="P-loop_NTPase"/>
</dbReference>
<dbReference type="NCBIfam" id="TIGR03598">
    <property type="entry name" value="GTPase_YsxC"/>
    <property type="match status" value="1"/>
</dbReference>
<dbReference type="PANTHER" id="PTHR11649:SF13">
    <property type="entry name" value="ENGB-TYPE G DOMAIN-CONTAINING PROTEIN"/>
    <property type="match status" value="1"/>
</dbReference>
<dbReference type="PANTHER" id="PTHR11649">
    <property type="entry name" value="MSS1/TRME-RELATED GTP-BINDING PROTEIN"/>
    <property type="match status" value="1"/>
</dbReference>
<dbReference type="Pfam" id="PF01926">
    <property type="entry name" value="MMR_HSR1"/>
    <property type="match status" value="1"/>
</dbReference>
<dbReference type="SUPFAM" id="SSF52540">
    <property type="entry name" value="P-loop containing nucleoside triphosphate hydrolases"/>
    <property type="match status" value="1"/>
</dbReference>
<dbReference type="PROSITE" id="PS51706">
    <property type="entry name" value="G_ENGB"/>
    <property type="match status" value="1"/>
</dbReference>
<reference key="1">
    <citation type="journal article" date="2005" name="BMC Genomics">
        <title>Bacterial genome adaptation to niches: divergence of the potential virulence genes in three Burkholderia species of different survival strategies.</title>
        <authorList>
            <person name="Kim H.S."/>
            <person name="Schell M.A."/>
            <person name="Yu Y."/>
            <person name="Ulrich R.L."/>
            <person name="Sarria S.H."/>
            <person name="Nierman W.C."/>
            <person name="DeShazer D."/>
        </authorList>
    </citation>
    <scope>NUCLEOTIDE SEQUENCE [LARGE SCALE GENOMIC DNA]</scope>
    <source>
        <strain>ATCC 700388 / DSM 13276 / CCUG 48851 / CIP 106301 / E264</strain>
    </source>
</reference>
<evidence type="ECO:0000255" key="1">
    <source>
        <dbReference type="HAMAP-Rule" id="MF_00321"/>
    </source>
</evidence>
<evidence type="ECO:0000305" key="2"/>
<evidence type="ECO:0007829" key="3">
    <source>
        <dbReference type="PDB" id="4DHE"/>
    </source>
</evidence>
<gene>
    <name evidence="1" type="primary">engB</name>
    <name type="ordered locus">BTH_I3037</name>
</gene>
<keyword id="KW-0002">3D-structure</keyword>
<keyword id="KW-0131">Cell cycle</keyword>
<keyword id="KW-0132">Cell division</keyword>
<keyword id="KW-0342">GTP-binding</keyword>
<keyword id="KW-0460">Magnesium</keyword>
<keyword id="KW-0479">Metal-binding</keyword>
<keyword id="KW-0547">Nucleotide-binding</keyword>
<keyword id="KW-0717">Septation</keyword>
<name>ENGB_BURTA</name>
<feature type="chain" id="PRO_0000266837" description="Probable GTP-binding protein EngB">
    <location>
        <begin position="1"/>
        <end position="219"/>
    </location>
</feature>
<feature type="domain" description="EngB-type G" evidence="1">
    <location>
        <begin position="24"/>
        <end position="207"/>
    </location>
</feature>
<feature type="binding site" evidence="1">
    <location>
        <begin position="32"/>
        <end position="39"/>
    </location>
    <ligand>
        <name>GTP</name>
        <dbReference type="ChEBI" id="CHEBI:37565"/>
    </ligand>
</feature>
<feature type="binding site" evidence="1">
    <location>
        <position position="39"/>
    </location>
    <ligand>
        <name>Mg(2+)</name>
        <dbReference type="ChEBI" id="CHEBI:18420"/>
    </ligand>
</feature>
<feature type="binding site" evidence="1">
    <location>
        <begin position="59"/>
        <end position="63"/>
    </location>
    <ligand>
        <name>GTP</name>
        <dbReference type="ChEBI" id="CHEBI:37565"/>
    </ligand>
</feature>
<feature type="binding site" evidence="1">
    <location>
        <position position="61"/>
    </location>
    <ligand>
        <name>Mg(2+)</name>
        <dbReference type="ChEBI" id="CHEBI:18420"/>
    </ligand>
</feature>
<feature type="binding site" evidence="1">
    <location>
        <begin position="81"/>
        <end position="84"/>
    </location>
    <ligand>
        <name>GTP</name>
        <dbReference type="ChEBI" id="CHEBI:37565"/>
    </ligand>
</feature>
<feature type="binding site" evidence="1">
    <location>
        <begin position="148"/>
        <end position="151"/>
    </location>
    <ligand>
        <name>GTP</name>
        <dbReference type="ChEBI" id="CHEBI:37565"/>
    </ligand>
</feature>
<feature type="binding site" evidence="1">
    <location>
        <begin position="185"/>
        <end position="188"/>
    </location>
    <ligand>
        <name>GTP</name>
        <dbReference type="ChEBI" id="CHEBI:37565"/>
    </ligand>
</feature>
<feature type="helix" evidence="3">
    <location>
        <begin position="1"/>
        <end position="6"/>
    </location>
</feature>
<feature type="strand" evidence="3">
    <location>
        <begin position="9"/>
        <end position="14"/>
    </location>
</feature>
<feature type="helix" evidence="3">
    <location>
        <begin position="17"/>
        <end position="19"/>
    </location>
</feature>
<feature type="strand" evidence="3">
    <location>
        <begin position="27"/>
        <end position="33"/>
    </location>
</feature>
<feature type="helix" evidence="3">
    <location>
        <begin position="35"/>
        <end position="45"/>
    </location>
</feature>
<feature type="strand" evidence="3">
    <location>
        <begin position="49"/>
        <end position="52"/>
    </location>
</feature>
<feature type="strand" evidence="3">
    <location>
        <begin position="64"/>
        <end position="70"/>
    </location>
</feature>
<feature type="strand" evidence="3">
    <location>
        <begin position="76"/>
        <end position="81"/>
    </location>
</feature>
<feature type="helix" evidence="3">
    <location>
        <begin position="94"/>
        <end position="108"/>
    </location>
</feature>
<feature type="strand" evidence="3">
    <location>
        <begin position="112"/>
        <end position="120"/>
    </location>
</feature>
<feature type="helix" evidence="3">
    <location>
        <begin position="127"/>
        <end position="136"/>
    </location>
</feature>
<feature type="helix" evidence="3">
    <location>
        <begin position="137"/>
        <end position="139"/>
    </location>
</feature>
<feature type="strand" evidence="3">
    <location>
        <begin position="143"/>
        <end position="148"/>
    </location>
</feature>
<feature type="helix" evidence="3">
    <location>
        <begin position="150"/>
        <end position="152"/>
    </location>
</feature>
<feature type="helix" evidence="3">
    <location>
        <begin position="155"/>
        <end position="175"/>
    </location>
</feature>
<feature type="strand" evidence="3">
    <location>
        <begin position="181"/>
        <end position="187"/>
    </location>
</feature>
<feature type="turn" evidence="3">
    <location>
        <begin position="188"/>
        <end position="191"/>
    </location>
</feature>
<feature type="helix" evidence="3">
    <location>
        <begin position="194"/>
        <end position="205"/>
    </location>
</feature>
<accession>Q2SU58</accession>
<comment type="function">
    <text evidence="1">Necessary for normal cell division and for the maintenance of normal septation.</text>
</comment>
<comment type="cofactor">
    <cofactor evidence="1">
        <name>Mg(2+)</name>
        <dbReference type="ChEBI" id="CHEBI:18420"/>
    </cofactor>
</comment>
<comment type="similarity">
    <text evidence="1">Belongs to the TRAFAC class TrmE-Era-EngA-EngB-Septin-like GTPase superfamily. EngB GTPase family.</text>
</comment>
<comment type="sequence caution" evidence="2">
    <conflict type="erroneous initiation">
        <sequence resource="EMBL-CDS" id="ABC39144"/>
    </conflict>
</comment>